<comment type="function">
    <text evidence="1">May be involved in several stages of intracellular trafficking. Overexpression of SNX15 disrupts the normal trafficking of proteins from the plasma membrane to recycling endosomes or the TGN (By similarity).</text>
</comment>
<comment type="subunit">
    <text evidence="1">Homodimer. Interacts with SNX1, SNX2 and SNX4 (By similarity).</text>
</comment>
<comment type="subcellular location">
    <subcellularLocation>
        <location evidence="1">Cytoplasm</location>
    </subcellularLocation>
    <subcellularLocation>
        <location evidence="1">Membrane</location>
        <topology evidence="1">Peripheral membrane protein</topology>
        <orientation evidence="1">Cytoplasmic side</orientation>
    </subcellularLocation>
    <subcellularLocation>
        <location evidence="1">Cytoplasmic vesicle membrane</location>
        <topology evidence="1">Peripheral membrane protein</topology>
        <orientation evidence="1">Cytoplasmic side</orientation>
    </subcellularLocation>
</comment>
<comment type="domain">
    <text evidence="1">The PX domain mediates interaction with membranes enriched in phosphatidylinositol 3-phosphate.</text>
</comment>
<comment type="similarity">
    <text evidence="5">Belongs to the sorting nexin family.</text>
</comment>
<feature type="chain" id="PRO_0000236202" description="Sorting nexin-15">
    <location>
        <begin position="1"/>
        <end position="337"/>
    </location>
</feature>
<feature type="domain" description="PX" evidence="3">
    <location>
        <begin position="1"/>
        <end position="130"/>
    </location>
</feature>
<feature type="domain" description="MIT">
    <location>
        <begin position="265"/>
        <end position="337"/>
    </location>
</feature>
<feature type="region of interest" description="Disordered" evidence="4">
    <location>
        <begin position="133"/>
        <end position="156"/>
    </location>
</feature>
<feature type="region of interest" description="Disordered" evidence="4">
    <location>
        <begin position="244"/>
        <end position="270"/>
    </location>
</feature>
<feature type="compositionally biased region" description="Pro residues" evidence="4">
    <location>
        <begin position="141"/>
        <end position="151"/>
    </location>
</feature>
<feature type="compositionally biased region" description="Acidic residues" evidence="4">
    <location>
        <begin position="253"/>
        <end position="263"/>
    </location>
</feature>
<feature type="binding site" evidence="1">
    <location>
        <position position="51"/>
    </location>
    <ligand>
        <name>a 1,2-diacyl-sn-glycero-3-phospho-(1D-myo-inositol-3-phosphate)</name>
        <dbReference type="ChEBI" id="CHEBI:58088"/>
    </ligand>
</feature>
<feature type="binding site" evidence="1">
    <location>
        <position position="53"/>
    </location>
    <ligand>
        <name>a 1,2-diacyl-sn-glycero-3-phospho-(1D-myo-inositol-3-phosphate)</name>
        <dbReference type="ChEBI" id="CHEBI:58088"/>
    </ligand>
</feature>
<feature type="binding site" evidence="1">
    <location>
        <position position="87"/>
    </location>
    <ligand>
        <name>a 1,2-diacyl-sn-glycero-3-phospho-(1D-myo-inositol-3-phosphate)</name>
        <dbReference type="ChEBI" id="CHEBI:58088"/>
    </ligand>
</feature>
<feature type="binding site" evidence="1">
    <location>
        <position position="96"/>
    </location>
    <ligand>
        <name>a 1,2-diacyl-sn-glycero-3-phospho-(1D-myo-inositol-3-phosphate)</name>
        <dbReference type="ChEBI" id="CHEBI:58088"/>
    </ligand>
</feature>
<feature type="modified residue" description="Omega-N-methylarginine" evidence="6">
    <location>
        <position position="105"/>
    </location>
</feature>
<feature type="modified residue" description="Phosphoserine" evidence="2">
    <location>
        <position position="201"/>
    </location>
</feature>
<feature type="modified residue" description="Phosphoserine" evidence="2">
    <location>
        <position position="227"/>
    </location>
</feature>
<dbReference type="EMBL" id="BC016091">
    <property type="protein sequence ID" value="AAH16091.1"/>
    <property type="molecule type" value="mRNA"/>
</dbReference>
<dbReference type="CCDS" id="CCDS29495.1"/>
<dbReference type="RefSeq" id="NP_081188.1">
    <property type="nucleotide sequence ID" value="NM_026912.2"/>
</dbReference>
<dbReference type="RefSeq" id="XP_006531894.1">
    <property type="nucleotide sequence ID" value="XM_006531831.5"/>
</dbReference>
<dbReference type="SMR" id="Q91WE1"/>
<dbReference type="FunCoup" id="Q91WE1">
    <property type="interactions" value="1549"/>
</dbReference>
<dbReference type="STRING" id="10090.ENSMUSP00000025702"/>
<dbReference type="GlyGen" id="Q91WE1">
    <property type="glycosylation" value="1 site, 1 O-linked glycan (1 site)"/>
</dbReference>
<dbReference type="iPTMnet" id="Q91WE1"/>
<dbReference type="PhosphoSitePlus" id="Q91WE1"/>
<dbReference type="jPOST" id="Q91WE1"/>
<dbReference type="PaxDb" id="10090-ENSMUSP00000025702"/>
<dbReference type="PeptideAtlas" id="Q91WE1"/>
<dbReference type="ProteomicsDB" id="261595"/>
<dbReference type="Pumba" id="Q91WE1"/>
<dbReference type="ABCD" id="Q91WE1">
    <property type="antibodies" value="79 sequenced antibodies"/>
</dbReference>
<dbReference type="Antibodypedia" id="29586">
    <property type="antibodies" value="231 antibodies from 29 providers"/>
</dbReference>
<dbReference type="DNASU" id="69024"/>
<dbReference type="Ensembl" id="ENSMUST00000025702.14">
    <property type="protein sequence ID" value="ENSMUSP00000025702.8"/>
    <property type="gene ID" value="ENSMUSG00000024787.15"/>
</dbReference>
<dbReference type="GeneID" id="69024"/>
<dbReference type="KEGG" id="mmu:69024"/>
<dbReference type="UCSC" id="uc008ghm.1">
    <property type="organism name" value="mouse"/>
</dbReference>
<dbReference type="AGR" id="MGI:1916274"/>
<dbReference type="CTD" id="29907"/>
<dbReference type="MGI" id="MGI:1916274">
    <property type="gene designation" value="Snx15"/>
</dbReference>
<dbReference type="VEuPathDB" id="HostDB:ENSMUSG00000024787"/>
<dbReference type="eggNOG" id="KOG0603">
    <property type="taxonomic scope" value="Eukaryota"/>
</dbReference>
<dbReference type="eggNOG" id="KOG2101">
    <property type="taxonomic scope" value="Eukaryota"/>
</dbReference>
<dbReference type="GeneTree" id="ENSGT00940000160125"/>
<dbReference type="InParanoid" id="Q91WE1"/>
<dbReference type="OMA" id="EMLVDQH"/>
<dbReference type="OrthoDB" id="1278353at2759"/>
<dbReference type="PhylomeDB" id="Q91WE1"/>
<dbReference type="TreeFam" id="TF323964"/>
<dbReference type="BioGRID-ORCS" id="69024">
    <property type="hits" value="2 hits in 77 CRISPR screens"/>
</dbReference>
<dbReference type="ChiTaRS" id="Snx15">
    <property type="organism name" value="mouse"/>
</dbReference>
<dbReference type="PRO" id="PR:Q91WE1"/>
<dbReference type="Proteomes" id="UP000000589">
    <property type="component" value="Chromosome 19"/>
</dbReference>
<dbReference type="RNAct" id="Q91WE1">
    <property type="molecule type" value="protein"/>
</dbReference>
<dbReference type="Bgee" id="ENSMUSG00000024787">
    <property type="expression patterns" value="Expressed in embryonic brain and 244 other cell types or tissues"/>
</dbReference>
<dbReference type="ExpressionAtlas" id="Q91WE1">
    <property type="expression patterns" value="baseline and differential"/>
</dbReference>
<dbReference type="GO" id="GO:0030659">
    <property type="term" value="C:cytoplasmic vesicle membrane"/>
    <property type="evidence" value="ECO:0007669"/>
    <property type="project" value="UniProtKB-SubCell"/>
</dbReference>
<dbReference type="GO" id="GO:0005829">
    <property type="term" value="C:cytosol"/>
    <property type="evidence" value="ECO:0007669"/>
    <property type="project" value="Ensembl"/>
</dbReference>
<dbReference type="GO" id="GO:0005730">
    <property type="term" value="C:nucleolus"/>
    <property type="evidence" value="ECO:0007669"/>
    <property type="project" value="Ensembl"/>
</dbReference>
<dbReference type="GO" id="GO:0005886">
    <property type="term" value="C:plasma membrane"/>
    <property type="evidence" value="ECO:0007669"/>
    <property type="project" value="Ensembl"/>
</dbReference>
<dbReference type="GO" id="GO:0035091">
    <property type="term" value="F:phosphatidylinositol binding"/>
    <property type="evidence" value="ECO:0007669"/>
    <property type="project" value="InterPro"/>
</dbReference>
<dbReference type="GO" id="GO:0015031">
    <property type="term" value="P:protein transport"/>
    <property type="evidence" value="ECO:0007669"/>
    <property type="project" value="UniProtKB-KW"/>
</dbReference>
<dbReference type="CDD" id="cd02677">
    <property type="entry name" value="MIT_SNX15"/>
    <property type="match status" value="1"/>
</dbReference>
<dbReference type="FunFam" id="3.30.1520.10:FF:000029">
    <property type="entry name" value="sorting nexin-15 isoform X1"/>
    <property type="match status" value="1"/>
</dbReference>
<dbReference type="Gene3D" id="1.20.58.80">
    <property type="entry name" value="Phosphotransferase system, lactose/cellobiose-type IIA subunit"/>
    <property type="match status" value="1"/>
</dbReference>
<dbReference type="Gene3D" id="3.30.1520.10">
    <property type="entry name" value="Phox-like domain"/>
    <property type="match status" value="1"/>
</dbReference>
<dbReference type="InterPro" id="IPR051866">
    <property type="entry name" value="Intracell_Sig-Traffick_Protein"/>
</dbReference>
<dbReference type="InterPro" id="IPR007330">
    <property type="entry name" value="MIT_dom"/>
</dbReference>
<dbReference type="InterPro" id="IPR036181">
    <property type="entry name" value="MIT_dom_sf"/>
</dbReference>
<dbReference type="InterPro" id="IPR001683">
    <property type="entry name" value="PX_dom"/>
</dbReference>
<dbReference type="InterPro" id="IPR036871">
    <property type="entry name" value="PX_dom_sf"/>
</dbReference>
<dbReference type="PANTHER" id="PTHR15508">
    <property type="entry name" value="RIBOSOMAL PROTEIN S6 KINASE"/>
    <property type="match status" value="1"/>
</dbReference>
<dbReference type="PANTHER" id="PTHR15508:SF9">
    <property type="entry name" value="SORTING NEXIN-15"/>
    <property type="match status" value="1"/>
</dbReference>
<dbReference type="Pfam" id="PF04212">
    <property type="entry name" value="MIT"/>
    <property type="match status" value="1"/>
</dbReference>
<dbReference type="Pfam" id="PF00787">
    <property type="entry name" value="PX"/>
    <property type="match status" value="1"/>
</dbReference>
<dbReference type="SMART" id="SM00745">
    <property type="entry name" value="MIT"/>
    <property type="match status" value="1"/>
</dbReference>
<dbReference type="SMART" id="SM00312">
    <property type="entry name" value="PX"/>
    <property type="match status" value="1"/>
</dbReference>
<dbReference type="SUPFAM" id="SSF116846">
    <property type="entry name" value="MIT domain"/>
    <property type="match status" value="1"/>
</dbReference>
<dbReference type="SUPFAM" id="SSF64268">
    <property type="entry name" value="PX domain"/>
    <property type="match status" value="1"/>
</dbReference>
<dbReference type="PROSITE" id="PS50195">
    <property type="entry name" value="PX"/>
    <property type="match status" value="1"/>
</dbReference>
<gene>
    <name type="primary">Snx15</name>
</gene>
<name>SNX15_MOUSE</name>
<proteinExistence type="evidence at protein level"/>
<accession>Q91WE1</accession>
<evidence type="ECO:0000250" key="1"/>
<evidence type="ECO:0000250" key="2">
    <source>
        <dbReference type="UniProtKB" id="Q9NRS6"/>
    </source>
</evidence>
<evidence type="ECO:0000255" key="3">
    <source>
        <dbReference type="PROSITE-ProRule" id="PRU00147"/>
    </source>
</evidence>
<evidence type="ECO:0000256" key="4">
    <source>
        <dbReference type="SAM" id="MobiDB-lite"/>
    </source>
</evidence>
<evidence type="ECO:0000305" key="5"/>
<evidence type="ECO:0007744" key="6">
    <source>
    </source>
</evidence>
<organism>
    <name type="scientific">Mus musculus</name>
    <name type="common">Mouse</name>
    <dbReference type="NCBI Taxonomy" id="10090"/>
    <lineage>
        <taxon>Eukaryota</taxon>
        <taxon>Metazoa</taxon>
        <taxon>Chordata</taxon>
        <taxon>Craniata</taxon>
        <taxon>Vertebrata</taxon>
        <taxon>Euteleostomi</taxon>
        <taxon>Mammalia</taxon>
        <taxon>Eutheria</taxon>
        <taxon>Euarchontoglires</taxon>
        <taxon>Glires</taxon>
        <taxon>Rodentia</taxon>
        <taxon>Myomorpha</taxon>
        <taxon>Muroidea</taxon>
        <taxon>Muridae</taxon>
        <taxon>Murinae</taxon>
        <taxon>Mus</taxon>
        <taxon>Mus</taxon>
    </lineage>
</organism>
<keyword id="KW-0963">Cytoplasm</keyword>
<keyword id="KW-0968">Cytoplasmic vesicle</keyword>
<keyword id="KW-0446">Lipid-binding</keyword>
<keyword id="KW-0472">Membrane</keyword>
<keyword id="KW-0488">Methylation</keyword>
<keyword id="KW-0597">Phosphoprotein</keyword>
<keyword id="KW-0653">Protein transport</keyword>
<keyword id="KW-1185">Reference proteome</keyword>
<keyword id="KW-0813">Transport</keyword>
<protein>
    <recommendedName>
        <fullName>Sorting nexin-15</fullName>
    </recommendedName>
</protein>
<reference key="1">
    <citation type="journal article" date="2004" name="Genome Res.">
        <title>The status, quality, and expansion of the NIH full-length cDNA project: the Mammalian Gene Collection (MGC).</title>
        <authorList>
            <consortium name="The MGC Project Team"/>
        </authorList>
    </citation>
    <scope>NUCLEOTIDE SEQUENCE [LARGE SCALE MRNA]</scope>
    <source>
        <tissue>Eye</tissue>
    </source>
</reference>
<reference key="2">
    <citation type="journal article" date="2010" name="Cell">
        <title>A tissue-specific atlas of mouse protein phosphorylation and expression.</title>
        <authorList>
            <person name="Huttlin E.L."/>
            <person name="Jedrychowski M.P."/>
            <person name="Elias J.E."/>
            <person name="Goswami T."/>
            <person name="Rad R."/>
            <person name="Beausoleil S.A."/>
            <person name="Villen J."/>
            <person name="Haas W."/>
            <person name="Sowa M.E."/>
            <person name="Gygi S.P."/>
        </authorList>
    </citation>
    <scope>IDENTIFICATION BY MASS SPECTROMETRY [LARGE SCALE ANALYSIS]</scope>
    <source>
        <tissue>Brain</tissue>
        <tissue>Lung</tissue>
        <tissue>Spleen</tissue>
        <tissue>Testis</tissue>
    </source>
</reference>
<reference key="3">
    <citation type="journal article" date="2014" name="Mol. Cell. Proteomics">
        <title>Immunoaffinity enrichment and mass spectrometry analysis of protein methylation.</title>
        <authorList>
            <person name="Guo A."/>
            <person name="Gu H."/>
            <person name="Zhou J."/>
            <person name="Mulhern D."/>
            <person name="Wang Y."/>
            <person name="Lee K.A."/>
            <person name="Yang V."/>
            <person name="Aguiar M."/>
            <person name="Kornhauser J."/>
            <person name="Jia X."/>
            <person name="Ren J."/>
            <person name="Beausoleil S.A."/>
            <person name="Silva J.C."/>
            <person name="Vemulapalli V."/>
            <person name="Bedford M.T."/>
            <person name="Comb M.J."/>
        </authorList>
    </citation>
    <scope>METHYLATION [LARGE SCALE ANALYSIS] AT ARG-105</scope>
    <scope>IDENTIFICATION BY MASS SPECTROMETRY [LARGE SCALE ANALYSIS]</scope>
    <source>
        <tissue>Brain</tissue>
        <tissue>Embryo</tissue>
    </source>
</reference>
<sequence length="337" mass="37742">MSRQAKDDFLRHYTVSDPRTHPKGYTEYKVTAQFISKKDPEDIKEVVVWKRYSDFRKLHGDLAYTHRNLFRRLEEFPAFPRAQVFGRFEASVIEERRKGAEDLLRFTVPIPALNNSPQLKEFFRGGEVTRPSEVSRDLRILPPPLIPTPPPDEARLLQPLPAERRGQEELEVPVDPLPSSPAQEALDLLFSCDSTEEASSSLARGPLSEAELALFDPYSKEESTGPSPTHTGELAAIEVESKRLDQEPWEPGGQEEEEAEDGEPAPAYLGQATELITQALRNEKAGAYAAALQGYQDGVHILLQGVSGDPSPARREGVKKKAAEYLKRAEMLHTHLP</sequence>